<name>MOC2A_ASPNC</name>
<comment type="function">
    <text evidence="1">Acts as a sulfur carrier required for molybdopterin biosynthesis. Component of the molybdopterin synthase complex that catalyzes the conversion of precursor Z into molybdopterin by mediating the incorporation of 2 sulfur atoms into precursor Z to generate a dithiolene group. In the complex, serves as sulfur donor by being thiocarboxylated (-COSH) at its C-terminus by uba4. After interaction with MOCS2B, the sulfur is then transferred to precursor Z to form molybdopterin.</text>
</comment>
<comment type="pathway">
    <text evidence="1">Cofactor biosynthesis; molybdopterin biosynthesis.</text>
</comment>
<comment type="subunit">
    <text evidence="1">Heterotetramer; composed of 2 small (MOCS2A) and 2 large (MOCS2B) subunits.</text>
</comment>
<comment type="subcellular location">
    <subcellularLocation>
        <location evidence="1">Cytoplasm</location>
    </subcellularLocation>
</comment>
<comment type="PTM">
    <text evidence="1">C-terminal thiocarboxylation occurs in 2 steps, it is first acyl-adenylated (-COAMP) via the hesA/moeB/thiF part of uba4, then thiocarboxylated (-COSH) via the rhodanese domain of uba4.</text>
</comment>
<comment type="similarity">
    <text evidence="1">Belongs to the MoaD family. MOCS2A subfamily.</text>
</comment>
<organism>
    <name type="scientific">Aspergillus niger (strain ATCC MYA-4892 / CBS 513.88 / FGSC A1513)</name>
    <dbReference type="NCBI Taxonomy" id="425011"/>
    <lineage>
        <taxon>Eukaryota</taxon>
        <taxon>Fungi</taxon>
        <taxon>Dikarya</taxon>
        <taxon>Ascomycota</taxon>
        <taxon>Pezizomycotina</taxon>
        <taxon>Eurotiomycetes</taxon>
        <taxon>Eurotiomycetidae</taxon>
        <taxon>Eurotiales</taxon>
        <taxon>Aspergillaceae</taxon>
        <taxon>Aspergillus</taxon>
        <taxon>Aspergillus subgen. Circumdati</taxon>
    </lineage>
</organism>
<dbReference type="EMBL" id="AM270260">
    <property type="protein sequence ID" value="CAK41042.1"/>
    <property type="molecule type" value="Genomic_DNA"/>
</dbReference>
<dbReference type="SMR" id="A2QYG2"/>
<dbReference type="EnsemblFungi" id="CAK41042">
    <property type="protein sequence ID" value="CAK41042"/>
    <property type="gene ID" value="An12g01120"/>
</dbReference>
<dbReference type="VEuPathDB" id="FungiDB:An12g01120"/>
<dbReference type="HOGENOM" id="CLU_114601_6_1_1"/>
<dbReference type="UniPathway" id="UPA00344"/>
<dbReference type="Proteomes" id="UP000006706">
    <property type="component" value="Chromosome 3L"/>
</dbReference>
<dbReference type="GO" id="GO:1990133">
    <property type="term" value="C:molybdopterin adenylyltransferase complex"/>
    <property type="evidence" value="ECO:0007669"/>
    <property type="project" value="TreeGrafter"/>
</dbReference>
<dbReference type="GO" id="GO:1990140">
    <property type="term" value="C:molybdopterin synthase complex"/>
    <property type="evidence" value="ECO:0000250"/>
    <property type="project" value="UniProtKB"/>
</dbReference>
<dbReference type="GO" id="GO:0030366">
    <property type="term" value="F:molybdopterin synthase activity"/>
    <property type="evidence" value="ECO:0007669"/>
    <property type="project" value="UniProtKB-UniRule"/>
</dbReference>
<dbReference type="GO" id="GO:0000166">
    <property type="term" value="F:nucleotide binding"/>
    <property type="evidence" value="ECO:0007669"/>
    <property type="project" value="UniProtKB-KW"/>
</dbReference>
<dbReference type="GO" id="GO:0006777">
    <property type="term" value="P:Mo-molybdopterin cofactor biosynthetic process"/>
    <property type="evidence" value="ECO:0000250"/>
    <property type="project" value="UniProtKB"/>
</dbReference>
<dbReference type="CDD" id="cd00754">
    <property type="entry name" value="Ubl_MoaD"/>
    <property type="match status" value="1"/>
</dbReference>
<dbReference type="Gene3D" id="3.10.20.30">
    <property type="match status" value="1"/>
</dbReference>
<dbReference type="HAMAP" id="MF_03051">
    <property type="entry name" value="MOCS2A"/>
    <property type="match status" value="1"/>
</dbReference>
<dbReference type="InterPro" id="IPR012675">
    <property type="entry name" value="Beta-grasp_dom_sf"/>
</dbReference>
<dbReference type="InterPro" id="IPR044672">
    <property type="entry name" value="MOCS2A"/>
</dbReference>
<dbReference type="InterPro" id="IPR028887">
    <property type="entry name" value="MOCS2A_euk"/>
</dbReference>
<dbReference type="InterPro" id="IPR016155">
    <property type="entry name" value="Mopterin_synth/thiamin_S_b"/>
</dbReference>
<dbReference type="InterPro" id="IPR003749">
    <property type="entry name" value="ThiS/MoaD-like"/>
</dbReference>
<dbReference type="PANTHER" id="PTHR33359">
    <property type="entry name" value="MOLYBDOPTERIN SYNTHASE SULFUR CARRIER SUBUNIT"/>
    <property type="match status" value="1"/>
</dbReference>
<dbReference type="PANTHER" id="PTHR33359:SF1">
    <property type="entry name" value="MOLYBDOPTERIN SYNTHASE SULFUR CARRIER SUBUNIT"/>
    <property type="match status" value="1"/>
</dbReference>
<dbReference type="Pfam" id="PF02597">
    <property type="entry name" value="ThiS"/>
    <property type="match status" value="1"/>
</dbReference>
<dbReference type="SUPFAM" id="SSF54285">
    <property type="entry name" value="MoaD/ThiS"/>
    <property type="match status" value="1"/>
</dbReference>
<feature type="chain" id="PRO_0000369321" description="Molybdopterin synthase sulfur carrier subunit">
    <location>
        <begin position="1"/>
        <end position="88"/>
    </location>
</feature>
<feature type="modified residue" description="1-thioglycine; alternate" evidence="1">
    <location>
        <position position="88"/>
    </location>
</feature>
<feature type="modified residue" description="Glycyl adenylate; alternate" evidence="1">
    <location>
        <position position="88"/>
    </location>
</feature>
<evidence type="ECO:0000255" key="1">
    <source>
        <dbReference type="HAMAP-Rule" id="MF_03051"/>
    </source>
</evidence>
<accession>A2QYG2</accession>
<keyword id="KW-0963">Cytoplasm</keyword>
<keyword id="KW-0501">Molybdenum cofactor biosynthesis</keyword>
<keyword id="KW-0547">Nucleotide-binding</keyword>
<keyword id="KW-0597">Phosphoprotein</keyword>
<keyword id="KW-1185">Reference proteome</keyword>
<proteinExistence type="inferred from homology"/>
<sequence>MSTSTTFQIHYFASASTYTGKQTERLPAPLPLPQLFDTLESMYPGIKEKVLTSCGVSLGDEYVDVEADIQVMIHPGDEVAVIPPVSSG</sequence>
<gene>
    <name evidence="1" type="primary">cnxG</name>
    <name type="ORF">An12g01120</name>
</gene>
<protein>
    <recommendedName>
        <fullName evidence="1">Molybdopterin synthase sulfur carrier subunit</fullName>
    </recommendedName>
    <alternativeName>
        <fullName evidence="1">Common component for nitrate reductase and xanthine dehydrogenase protein G</fullName>
    </alternativeName>
    <alternativeName>
        <fullName evidence="1">Molybdenum cofactor synthesis protein 2 small subunit</fullName>
    </alternativeName>
    <alternativeName>
        <fullName evidence="1">Molybdenum cofactor synthesis protein 2A</fullName>
        <shortName evidence="1">MOCS2A</shortName>
    </alternativeName>
    <alternativeName>
        <fullName evidence="1">Sulfur carrier protein MOCS2A</fullName>
    </alternativeName>
</protein>
<reference key="1">
    <citation type="journal article" date="2007" name="Nat. Biotechnol.">
        <title>Genome sequencing and analysis of the versatile cell factory Aspergillus niger CBS 513.88.</title>
        <authorList>
            <person name="Pel H.J."/>
            <person name="de Winde J.H."/>
            <person name="Archer D.B."/>
            <person name="Dyer P.S."/>
            <person name="Hofmann G."/>
            <person name="Schaap P.J."/>
            <person name="Turner G."/>
            <person name="de Vries R.P."/>
            <person name="Albang R."/>
            <person name="Albermann K."/>
            <person name="Andersen M.R."/>
            <person name="Bendtsen J.D."/>
            <person name="Benen J.A.E."/>
            <person name="van den Berg M."/>
            <person name="Breestraat S."/>
            <person name="Caddick M.X."/>
            <person name="Contreras R."/>
            <person name="Cornell M."/>
            <person name="Coutinho P.M."/>
            <person name="Danchin E.G.J."/>
            <person name="Debets A.J.M."/>
            <person name="Dekker P."/>
            <person name="van Dijck P.W.M."/>
            <person name="van Dijk A."/>
            <person name="Dijkhuizen L."/>
            <person name="Driessen A.J.M."/>
            <person name="d'Enfert C."/>
            <person name="Geysens S."/>
            <person name="Goosen C."/>
            <person name="Groot G.S.P."/>
            <person name="de Groot P.W.J."/>
            <person name="Guillemette T."/>
            <person name="Henrissat B."/>
            <person name="Herweijer M."/>
            <person name="van den Hombergh J.P.T.W."/>
            <person name="van den Hondel C.A.M.J.J."/>
            <person name="van der Heijden R.T.J.M."/>
            <person name="van der Kaaij R.M."/>
            <person name="Klis F.M."/>
            <person name="Kools H.J."/>
            <person name="Kubicek C.P."/>
            <person name="van Kuyk P.A."/>
            <person name="Lauber J."/>
            <person name="Lu X."/>
            <person name="van der Maarel M.J.E.C."/>
            <person name="Meulenberg R."/>
            <person name="Menke H."/>
            <person name="Mortimer M.A."/>
            <person name="Nielsen J."/>
            <person name="Oliver S.G."/>
            <person name="Olsthoorn M."/>
            <person name="Pal K."/>
            <person name="van Peij N.N.M.E."/>
            <person name="Ram A.F.J."/>
            <person name="Rinas U."/>
            <person name="Roubos J.A."/>
            <person name="Sagt C.M.J."/>
            <person name="Schmoll M."/>
            <person name="Sun J."/>
            <person name="Ussery D."/>
            <person name="Varga J."/>
            <person name="Vervecken W."/>
            <person name="van de Vondervoort P.J.J."/>
            <person name="Wedler H."/>
            <person name="Woesten H.A.B."/>
            <person name="Zeng A.-P."/>
            <person name="van Ooyen A.J.J."/>
            <person name="Visser J."/>
            <person name="Stam H."/>
        </authorList>
    </citation>
    <scope>NUCLEOTIDE SEQUENCE [LARGE SCALE GENOMIC DNA]</scope>
    <source>
        <strain>ATCC MYA-4892 / CBS 513.88 / FGSC A1513</strain>
    </source>
</reference>